<evidence type="ECO:0000250" key="1">
    <source>
        <dbReference type="UniProtKB" id="P51541"/>
    </source>
</evidence>
<evidence type="ECO:0000250" key="2">
    <source>
        <dbReference type="UniProtKB" id="Q004B5"/>
    </source>
</evidence>
<evidence type="ECO:0000255" key="3">
    <source>
        <dbReference type="PROSITE-ProRule" id="PRU00842"/>
    </source>
</evidence>
<evidence type="ECO:0000255" key="4">
    <source>
        <dbReference type="PROSITE-ProRule" id="PRU00843"/>
    </source>
</evidence>
<evidence type="ECO:0000269" key="5">
    <source>
    </source>
</evidence>
<evidence type="ECO:0000303" key="6">
    <source>
    </source>
</evidence>
<evidence type="ECO:0000305" key="7"/>
<organism>
    <name type="scientific">Chionoecetes opilio</name>
    <name type="common">Atlantic snow crab</name>
    <name type="synonym">Cancer opilio</name>
    <dbReference type="NCBI Taxonomy" id="41210"/>
    <lineage>
        <taxon>Eukaryota</taxon>
        <taxon>Metazoa</taxon>
        <taxon>Ecdysozoa</taxon>
        <taxon>Arthropoda</taxon>
        <taxon>Crustacea</taxon>
        <taxon>Multicrustacea</taxon>
        <taxon>Malacostraca</taxon>
        <taxon>Eumalacostraca</taxon>
        <taxon>Eucarida</taxon>
        <taxon>Decapoda</taxon>
        <taxon>Pleocyemata</taxon>
        <taxon>Brachyura</taxon>
        <taxon>Eubrachyura</taxon>
        <taxon>Majoidea</taxon>
        <taxon>Majidae</taxon>
        <taxon>Chionoecetes</taxon>
    </lineage>
</organism>
<comment type="catalytic activity">
    <reaction evidence="1">
        <text>L-arginine + ATP = N(omega)-phospho-L-arginine + ADP + H(+)</text>
        <dbReference type="Rhea" id="RHEA:22940"/>
        <dbReference type="ChEBI" id="CHEBI:15378"/>
        <dbReference type="ChEBI" id="CHEBI:30616"/>
        <dbReference type="ChEBI" id="CHEBI:32682"/>
        <dbReference type="ChEBI" id="CHEBI:58477"/>
        <dbReference type="ChEBI" id="CHEBI:456216"/>
        <dbReference type="EC" id="2.7.3.3"/>
    </reaction>
</comment>
<comment type="allergen">
    <text evidence="5">Causes an allergic reaction in human. Binds to IgE.</text>
</comment>
<comment type="similarity">
    <text evidence="3 4">Belongs to the ATP:guanido phosphotransferase family.</text>
</comment>
<dbReference type="EC" id="2.7.3.3" evidence="1"/>
<dbReference type="Allergome" id="9057">
    <property type="allergen name" value="Chi o 2"/>
</dbReference>
<dbReference type="GO" id="GO:0005615">
    <property type="term" value="C:extracellular space"/>
    <property type="evidence" value="ECO:0007669"/>
    <property type="project" value="TreeGrafter"/>
</dbReference>
<dbReference type="GO" id="GO:0004054">
    <property type="term" value="F:arginine kinase activity"/>
    <property type="evidence" value="ECO:0000250"/>
    <property type="project" value="UniProtKB"/>
</dbReference>
<dbReference type="GO" id="GO:0005524">
    <property type="term" value="F:ATP binding"/>
    <property type="evidence" value="ECO:0007669"/>
    <property type="project" value="UniProtKB-KW"/>
</dbReference>
<dbReference type="GO" id="GO:0004111">
    <property type="term" value="F:creatine kinase activity"/>
    <property type="evidence" value="ECO:0007669"/>
    <property type="project" value="InterPro"/>
</dbReference>
<dbReference type="GO" id="GO:0046314">
    <property type="term" value="P:phosphocreatine biosynthetic process"/>
    <property type="evidence" value="ECO:0007669"/>
    <property type="project" value="InterPro"/>
</dbReference>
<dbReference type="Gene3D" id="3.30.590.10">
    <property type="entry name" value="Glutamine synthetase/guanido kinase, catalytic domain"/>
    <property type="match status" value="1"/>
</dbReference>
<dbReference type="InterPro" id="IPR000749">
    <property type="entry name" value="ATP-guanido_PTrfase"/>
</dbReference>
<dbReference type="InterPro" id="IPR022415">
    <property type="entry name" value="ATP-guanido_PTrfase_AS"/>
</dbReference>
<dbReference type="InterPro" id="IPR022414">
    <property type="entry name" value="ATP-guanido_PTrfase_cat"/>
</dbReference>
<dbReference type="InterPro" id="IPR014746">
    <property type="entry name" value="Gln_synth/guanido_kin_cat_dom"/>
</dbReference>
<dbReference type="PANTHER" id="PTHR11547:SF38">
    <property type="entry name" value="ARGININE KINASE 1-RELATED"/>
    <property type="match status" value="1"/>
</dbReference>
<dbReference type="PANTHER" id="PTHR11547">
    <property type="entry name" value="ARGININE OR CREATINE KINASE"/>
    <property type="match status" value="1"/>
</dbReference>
<dbReference type="Pfam" id="PF00217">
    <property type="entry name" value="ATP-gua_Ptrans"/>
    <property type="match status" value="1"/>
</dbReference>
<dbReference type="SUPFAM" id="SSF55931">
    <property type="entry name" value="Glutamine synthetase/guanido kinase"/>
    <property type="match status" value="1"/>
</dbReference>
<dbReference type="PROSITE" id="PS00112">
    <property type="entry name" value="PHOSPHAGEN_KINASE"/>
    <property type="match status" value="1"/>
</dbReference>
<dbReference type="PROSITE" id="PS51510">
    <property type="entry name" value="PHOSPHAGEN_KINASE_C"/>
    <property type="match status" value="1"/>
</dbReference>
<reference evidence="7" key="1">
    <citation type="journal article" date="2011" name="J. Proteomics">
        <title>Biomolecular characterization of allergenic proteins in snow crab (Chionoecetes opilio) and de novo sequencing of the second allergen arginine kinase using tandem mass spectrometry.</title>
        <authorList>
            <person name="Abdel Rahman A.M."/>
            <person name="Kamath S.D."/>
            <person name="Lopata A.L."/>
            <person name="Robinson J.J."/>
            <person name="Helleur R.J."/>
        </authorList>
    </citation>
    <scope>PROTEIN SEQUENCE</scope>
    <scope>ALLERGEN</scope>
    <source>
        <tissue evidence="5">Muscle</tissue>
    </source>
</reference>
<feature type="chain" id="PRO_0000410433" description="Arginine kinase">
    <location>
        <begin position="1"/>
        <end position="223"/>
    </location>
</feature>
<feature type="domain" description="Phosphagen kinase N-terminal" evidence="1 3">
    <location>
        <begin position="9"/>
        <end status="unknown"/>
    </location>
</feature>
<feature type="domain" description="Phosphagen kinase C-terminal" evidence="1 4">
    <location>
        <begin position="56"/>
        <end position="222"/>
    </location>
</feature>
<feature type="binding site" evidence="1 4">
    <location>
        <begin position="59"/>
        <end position="63"/>
    </location>
    <ligand>
        <name>ATP</name>
        <dbReference type="ChEBI" id="CHEBI:30616"/>
    </ligand>
</feature>
<feature type="binding site" evidence="1 4">
    <location>
        <position position="68"/>
    </location>
    <ligand>
        <name>ATP</name>
        <dbReference type="ChEBI" id="CHEBI:30616"/>
    </ligand>
</feature>
<feature type="binding site" evidence="2">
    <location>
        <position position="141"/>
    </location>
    <ligand>
        <name>L-arginine</name>
        <dbReference type="ChEBI" id="CHEBI:32682"/>
    </ligand>
</feature>
<feature type="binding site" evidence="1 4">
    <location>
        <begin position="150"/>
        <end position="154"/>
    </location>
    <ligand>
        <name>ATP</name>
        <dbReference type="ChEBI" id="CHEBI:30616"/>
    </ligand>
</feature>
<feature type="binding site" evidence="1 4">
    <location>
        <begin position="175"/>
        <end position="180"/>
    </location>
    <ligand>
        <name>ATP</name>
        <dbReference type="ChEBI" id="CHEBI:30616"/>
    </ligand>
</feature>
<feature type="binding site" evidence="2">
    <location>
        <position position="180"/>
    </location>
    <ligand>
        <name>L-arginine</name>
        <dbReference type="ChEBI" id="CHEBI:32682"/>
    </ligand>
</feature>
<feature type="non-consecutive residues" evidence="6">
    <location>
        <begin position="24"/>
        <end position="25"/>
    </location>
</feature>
<feature type="non-consecutive residues" evidence="6">
    <location>
        <begin position="31"/>
        <end position="32"/>
    </location>
</feature>
<feature type="non-consecutive residues" evidence="6">
    <location>
        <begin position="63"/>
        <end position="64"/>
    </location>
</feature>
<feature type="non-consecutive residues" evidence="6">
    <location>
        <begin position="99"/>
        <end position="100"/>
    </location>
</feature>
<feature type="non-consecutive residues" evidence="6">
    <location>
        <begin position="159"/>
        <end position="160"/>
    </location>
</feature>
<keyword id="KW-0020">Allergen</keyword>
<keyword id="KW-0067">ATP-binding</keyword>
<keyword id="KW-0903">Direct protein sequencing</keyword>
<keyword id="KW-0418">Kinase</keyword>
<keyword id="KW-0547">Nucleotide-binding</keyword>
<keyword id="KW-0808">Transferase</keyword>
<name>KARG_CHIOP</name>
<accession>P86699</accession>
<proteinExistence type="evidence at protein level"/>
<sequence length="223" mass="25316">MADAATISKLEEGFKKLQGATDCKDVFDQLKQTDKHPNKDFGDVNQFVNVDPDGKFVISTRVRLIDDHFLFKEGDRFLQAANACRYWPSGRGIFHNDKKIISMQMGGDLGQVYRRLVSAVNEIEKRVPFSHHDRLGFLTFCPTNLGTTVRASVHIKLPKXEKLEEVAGKYSLQVRGTRGEHTEAEGGVYDISNKRRMGLTEFQAVKEMQDGILELIKIEKEMQ</sequence>
<protein>
    <recommendedName>
        <fullName evidence="6">Arginine kinase</fullName>
        <shortName evidence="6">AK</shortName>
        <ecNumber evidence="1">2.7.3.3</ecNumber>
    </recommendedName>
    <allergenName>Chi o 3</allergenName>
</protein>